<organism>
    <name type="scientific">Staphylococcus epidermidis (strain ATCC 35984 / DSM 28319 / BCRC 17069 / CCUG 31568 / BM 3577 / RP62A)</name>
    <dbReference type="NCBI Taxonomy" id="176279"/>
    <lineage>
        <taxon>Bacteria</taxon>
        <taxon>Bacillati</taxon>
        <taxon>Bacillota</taxon>
        <taxon>Bacilli</taxon>
        <taxon>Bacillales</taxon>
        <taxon>Staphylococcaceae</taxon>
        <taxon>Staphylococcus</taxon>
    </lineage>
</organism>
<protein>
    <recommendedName>
        <fullName evidence="1">Malate dehydrogenase</fullName>
        <ecNumber evidence="1">1.1.1.37</ecNumber>
    </recommendedName>
</protein>
<proteinExistence type="inferred from homology"/>
<evidence type="ECO:0000255" key="1">
    <source>
        <dbReference type="HAMAP-Rule" id="MF_00487"/>
    </source>
</evidence>
<comment type="function">
    <text evidence="1">Catalyzes the reversible oxidation of malate to oxaloacetate.</text>
</comment>
<comment type="catalytic activity">
    <reaction evidence="1">
        <text>(S)-malate + NAD(+) = oxaloacetate + NADH + H(+)</text>
        <dbReference type="Rhea" id="RHEA:21432"/>
        <dbReference type="ChEBI" id="CHEBI:15378"/>
        <dbReference type="ChEBI" id="CHEBI:15589"/>
        <dbReference type="ChEBI" id="CHEBI:16452"/>
        <dbReference type="ChEBI" id="CHEBI:57540"/>
        <dbReference type="ChEBI" id="CHEBI:57945"/>
        <dbReference type="EC" id="1.1.1.37"/>
    </reaction>
</comment>
<comment type="similarity">
    <text evidence="1">Belongs to the LDH/MDH superfamily. MDH type 3 family.</text>
</comment>
<sequence length="313" mass="34231">MVNRRKISIIGAGHTGGTLAFILAQKELGDIVLIERQQSEGMAKGKALDILESGPIWGFDTSVHGSVNIEDIKDSDIVVMTAGIPRKSGMTREELVQTNEQIVRETALQIATYAPHSIIIVLTNPVDVMTYTAFKASGFPKERIIGQSGILDAARYRTFIAQELNVSVKDVNGFVLGGHGDTMLPLINNTHINGIPVKHLISEEKIDQIVERTRKGGAEIVALLGQGSAYYAPATAIYETIDAIFNDRKRLLPSIAYLEGEYGCSDICFGVPTIIGYQGIEKIIEVDMNNDEYQQLQHSAQAVSEVKNSLKFK</sequence>
<accession>Q5HR46</accession>
<reference key="1">
    <citation type="journal article" date="2005" name="J. Bacteriol.">
        <title>Insights on evolution of virulence and resistance from the complete genome analysis of an early methicillin-resistant Staphylococcus aureus strain and a biofilm-producing methicillin-resistant Staphylococcus epidermidis strain.</title>
        <authorList>
            <person name="Gill S.R."/>
            <person name="Fouts D.E."/>
            <person name="Archer G.L."/>
            <person name="Mongodin E.F."/>
            <person name="DeBoy R.T."/>
            <person name="Ravel J."/>
            <person name="Paulsen I.T."/>
            <person name="Kolonay J.F."/>
            <person name="Brinkac L.M."/>
            <person name="Beanan M.J."/>
            <person name="Dodson R.J."/>
            <person name="Daugherty S.C."/>
            <person name="Madupu R."/>
            <person name="Angiuoli S.V."/>
            <person name="Durkin A.S."/>
            <person name="Haft D.H."/>
            <person name="Vamathevan J.J."/>
            <person name="Khouri H."/>
            <person name="Utterback T.R."/>
            <person name="Lee C."/>
            <person name="Dimitrov G."/>
            <person name="Jiang L."/>
            <person name="Qin H."/>
            <person name="Weidman J."/>
            <person name="Tran K."/>
            <person name="Kang K.H."/>
            <person name="Hance I.R."/>
            <person name="Nelson K.E."/>
            <person name="Fraser C.M."/>
        </authorList>
    </citation>
    <scope>NUCLEOTIDE SEQUENCE [LARGE SCALE GENOMIC DNA]</scope>
    <source>
        <strain>ATCC 35984 / DSM 28319 / BCRC 17069 / CCUG 31568 / BM 3577 / RP62A</strain>
    </source>
</reference>
<name>MDH_STAEQ</name>
<gene>
    <name evidence="1" type="primary">mdh</name>
    <name type="ordered locus">SERP0347</name>
</gene>
<keyword id="KW-0520">NAD</keyword>
<keyword id="KW-0560">Oxidoreductase</keyword>
<keyword id="KW-1185">Reference proteome</keyword>
<keyword id="KW-0816">Tricarboxylic acid cycle</keyword>
<feature type="chain" id="PRO_0000113473" description="Malate dehydrogenase">
    <location>
        <begin position="1"/>
        <end position="313"/>
    </location>
</feature>
<feature type="active site" description="Proton acceptor" evidence="1">
    <location>
        <position position="179"/>
    </location>
</feature>
<feature type="binding site" evidence="1">
    <location>
        <begin position="11"/>
        <end position="16"/>
    </location>
    <ligand>
        <name>NAD(+)</name>
        <dbReference type="ChEBI" id="CHEBI:57540"/>
    </ligand>
</feature>
<feature type="binding site" evidence="1">
    <location>
        <position position="86"/>
    </location>
    <ligand>
        <name>substrate</name>
    </ligand>
</feature>
<feature type="binding site" evidence="1">
    <location>
        <position position="92"/>
    </location>
    <ligand>
        <name>substrate</name>
    </ligand>
</feature>
<feature type="binding site" evidence="1">
    <location>
        <position position="99"/>
    </location>
    <ligand>
        <name>NAD(+)</name>
        <dbReference type="ChEBI" id="CHEBI:57540"/>
    </ligand>
</feature>
<feature type="binding site" evidence="1">
    <location>
        <begin position="122"/>
        <end position="124"/>
    </location>
    <ligand>
        <name>NAD(+)</name>
        <dbReference type="ChEBI" id="CHEBI:57540"/>
    </ligand>
</feature>
<feature type="binding site" evidence="1">
    <location>
        <position position="124"/>
    </location>
    <ligand>
        <name>substrate</name>
    </ligand>
</feature>
<feature type="binding site" evidence="1">
    <location>
        <position position="155"/>
    </location>
    <ligand>
        <name>substrate</name>
    </ligand>
</feature>
<dbReference type="EC" id="1.1.1.37" evidence="1"/>
<dbReference type="EMBL" id="CP000029">
    <property type="protein sequence ID" value="AAW53733.1"/>
    <property type="molecule type" value="Genomic_DNA"/>
</dbReference>
<dbReference type="RefSeq" id="WP_002438862.1">
    <property type="nucleotide sequence ID" value="NC_002976.3"/>
</dbReference>
<dbReference type="SMR" id="Q5HR46"/>
<dbReference type="STRING" id="176279.SERP0347"/>
<dbReference type="GeneID" id="50019384"/>
<dbReference type="KEGG" id="ser:SERP0347"/>
<dbReference type="eggNOG" id="COG0039">
    <property type="taxonomic scope" value="Bacteria"/>
</dbReference>
<dbReference type="HOGENOM" id="CLU_045401_2_1_9"/>
<dbReference type="Proteomes" id="UP000000531">
    <property type="component" value="Chromosome"/>
</dbReference>
<dbReference type="GO" id="GO:0004459">
    <property type="term" value="F:L-lactate dehydrogenase activity"/>
    <property type="evidence" value="ECO:0007669"/>
    <property type="project" value="TreeGrafter"/>
</dbReference>
<dbReference type="GO" id="GO:0030060">
    <property type="term" value="F:L-malate dehydrogenase (NAD+) activity"/>
    <property type="evidence" value="ECO:0007669"/>
    <property type="project" value="UniProtKB-UniRule"/>
</dbReference>
<dbReference type="GO" id="GO:0006089">
    <property type="term" value="P:lactate metabolic process"/>
    <property type="evidence" value="ECO:0007669"/>
    <property type="project" value="TreeGrafter"/>
</dbReference>
<dbReference type="GO" id="GO:0006099">
    <property type="term" value="P:tricarboxylic acid cycle"/>
    <property type="evidence" value="ECO:0007669"/>
    <property type="project" value="UniProtKB-UniRule"/>
</dbReference>
<dbReference type="CDD" id="cd01339">
    <property type="entry name" value="LDH-like_MDH"/>
    <property type="match status" value="1"/>
</dbReference>
<dbReference type="FunFam" id="3.40.50.720:FF:000018">
    <property type="entry name" value="Malate dehydrogenase"/>
    <property type="match status" value="1"/>
</dbReference>
<dbReference type="FunFam" id="3.90.110.10:FF:000004">
    <property type="entry name" value="Malate dehydrogenase"/>
    <property type="match status" value="1"/>
</dbReference>
<dbReference type="Gene3D" id="3.90.110.10">
    <property type="entry name" value="Lactate dehydrogenase/glycoside hydrolase, family 4, C-terminal"/>
    <property type="match status" value="1"/>
</dbReference>
<dbReference type="Gene3D" id="3.40.50.720">
    <property type="entry name" value="NAD(P)-binding Rossmann-like Domain"/>
    <property type="match status" value="1"/>
</dbReference>
<dbReference type="HAMAP" id="MF_00487">
    <property type="entry name" value="Malate_dehydrog_3"/>
    <property type="match status" value="1"/>
</dbReference>
<dbReference type="InterPro" id="IPR001557">
    <property type="entry name" value="L-lactate/malate_DH"/>
</dbReference>
<dbReference type="InterPro" id="IPR022383">
    <property type="entry name" value="Lactate/malate_DH_C"/>
</dbReference>
<dbReference type="InterPro" id="IPR001236">
    <property type="entry name" value="Lactate/malate_DH_N"/>
</dbReference>
<dbReference type="InterPro" id="IPR015955">
    <property type="entry name" value="Lactate_DH/Glyco_Ohase_4_C"/>
</dbReference>
<dbReference type="InterPro" id="IPR011275">
    <property type="entry name" value="Malate_DH_type3"/>
</dbReference>
<dbReference type="InterPro" id="IPR036291">
    <property type="entry name" value="NAD(P)-bd_dom_sf"/>
</dbReference>
<dbReference type="NCBIfam" id="TIGR01763">
    <property type="entry name" value="MalateDH_bact"/>
    <property type="match status" value="1"/>
</dbReference>
<dbReference type="NCBIfam" id="NF004863">
    <property type="entry name" value="PRK06223.1"/>
    <property type="match status" value="1"/>
</dbReference>
<dbReference type="PANTHER" id="PTHR43128">
    <property type="entry name" value="L-2-HYDROXYCARBOXYLATE DEHYDROGENASE (NAD(P)(+))"/>
    <property type="match status" value="1"/>
</dbReference>
<dbReference type="PANTHER" id="PTHR43128:SF16">
    <property type="entry name" value="L-LACTATE DEHYDROGENASE"/>
    <property type="match status" value="1"/>
</dbReference>
<dbReference type="Pfam" id="PF02866">
    <property type="entry name" value="Ldh_1_C"/>
    <property type="match status" value="1"/>
</dbReference>
<dbReference type="Pfam" id="PF00056">
    <property type="entry name" value="Ldh_1_N"/>
    <property type="match status" value="1"/>
</dbReference>
<dbReference type="PIRSF" id="PIRSF000102">
    <property type="entry name" value="Lac_mal_DH"/>
    <property type="match status" value="1"/>
</dbReference>
<dbReference type="PRINTS" id="PR00086">
    <property type="entry name" value="LLDHDRGNASE"/>
</dbReference>
<dbReference type="SUPFAM" id="SSF56327">
    <property type="entry name" value="LDH C-terminal domain-like"/>
    <property type="match status" value="1"/>
</dbReference>
<dbReference type="SUPFAM" id="SSF51735">
    <property type="entry name" value="NAD(P)-binding Rossmann-fold domains"/>
    <property type="match status" value="1"/>
</dbReference>